<name>TPT_SOLTU</name>
<organism>
    <name type="scientific">Solanum tuberosum</name>
    <name type="common">Potato</name>
    <dbReference type="NCBI Taxonomy" id="4113"/>
    <lineage>
        <taxon>Eukaryota</taxon>
        <taxon>Viridiplantae</taxon>
        <taxon>Streptophyta</taxon>
        <taxon>Embryophyta</taxon>
        <taxon>Tracheophyta</taxon>
        <taxon>Spermatophyta</taxon>
        <taxon>Magnoliopsida</taxon>
        <taxon>eudicotyledons</taxon>
        <taxon>Gunneridae</taxon>
        <taxon>Pentapetalae</taxon>
        <taxon>asterids</taxon>
        <taxon>lamiids</taxon>
        <taxon>Solanales</taxon>
        <taxon>Solanaceae</taxon>
        <taxon>Solanoideae</taxon>
        <taxon>Solaneae</taxon>
        <taxon>Solanum</taxon>
    </lineage>
</organism>
<comment type="function">
    <text>Mediates the export of fixed carbons from the chloroplasts into the cytosol in the form of triose phosphates.</text>
</comment>
<comment type="subcellular location">
    <subcellularLocation>
        <location>Plastid</location>
        <location>Chloroplast membrane</location>
        <topology>Multi-pass membrane protein</topology>
    </subcellularLocation>
    <text>Located in zones of contact between the inner and outer membrane of the chloroplast.</text>
</comment>
<comment type="similarity">
    <text evidence="2">Belongs to the TPT transporter family. TPT (TC 2.A.7.9) subfamily.</text>
</comment>
<keyword id="KW-0150">Chloroplast</keyword>
<keyword id="KW-0472">Membrane</keyword>
<keyword id="KW-0934">Plastid</keyword>
<keyword id="KW-1185">Reference proteome</keyword>
<keyword id="KW-0809">Transit peptide</keyword>
<keyword id="KW-0812">Transmembrane</keyword>
<keyword id="KW-1133">Transmembrane helix</keyword>
<keyword id="KW-0813">Transport</keyword>
<reference key="1">
    <citation type="journal article" date="1993" name="Mol. Gen. Genet.">
        <title>Expression of the triose phosphate translocator gene from potato is light dependent and restricted to green tissues.</title>
        <authorList>
            <person name="Schultz B."/>
            <person name="Frommer W.B."/>
            <person name="Fluegge U.-I."/>
            <person name="Hummel S."/>
            <person name="Fischer K."/>
            <person name="Willmitzer L."/>
        </authorList>
    </citation>
    <scope>NUCLEOTIDE SEQUENCE [MRNA]</scope>
    <source>
        <strain>cv. Desiree</strain>
        <tissue>Leaf</tissue>
    </source>
</reference>
<gene>
    <name type="primary">TPT</name>
</gene>
<evidence type="ECO:0000255" key="1"/>
<evidence type="ECO:0000305" key="2"/>
<protein>
    <recommendedName>
        <fullName>Triose phosphate/phosphate translocator, chloroplastic</fullName>
        <shortName>cTPT</shortName>
    </recommendedName>
    <alternativeName>
        <fullName>E29</fullName>
    </alternativeName>
</protein>
<proteinExistence type="evidence at transcript level"/>
<accession>P29463</accession>
<feature type="transit peptide" description="Chloroplast" evidence="1">
    <location>
        <begin position="1"/>
        <end position="78"/>
    </location>
</feature>
<feature type="chain" id="PRO_0000035709" description="Triose phosphate/phosphate translocator, chloroplastic">
    <location>
        <begin position="79"/>
        <end position="414"/>
    </location>
</feature>
<feature type="topological domain" description="Chloroplast intermembrane" evidence="1">
    <location>
        <begin position="79"/>
        <end position="108"/>
    </location>
</feature>
<feature type="transmembrane region" description="Helical" evidence="1">
    <location>
        <begin position="109"/>
        <end position="129"/>
    </location>
</feature>
<feature type="topological domain" description="Lumenal" evidence="1">
    <location>
        <begin position="130"/>
        <end position="141"/>
    </location>
</feature>
<feature type="transmembrane region" description="Helical" evidence="1">
    <location>
        <begin position="142"/>
        <end position="162"/>
    </location>
</feature>
<feature type="topological domain" description="Chloroplast intermembrane" evidence="1">
    <location>
        <begin position="163"/>
        <end position="219"/>
    </location>
</feature>
<feature type="transmembrane region" description="Helical" evidence="1">
    <location>
        <begin position="220"/>
        <end position="240"/>
    </location>
</feature>
<feature type="topological domain" description="Lumenal" evidence="1">
    <location>
        <begin position="241"/>
        <end position="284"/>
    </location>
</feature>
<feature type="transmembrane region" description="Helical" evidence="1">
    <location>
        <begin position="285"/>
        <end position="304"/>
    </location>
</feature>
<feature type="topological domain" description="Chloroplast intermembrane" evidence="1">
    <location>
        <begin position="305"/>
        <end position="382"/>
    </location>
</feature>
<feature type="transmembrane region" description="Helical" evidence="1">
    <location>
        <begin position="383"/>
        <end position="403"/>
    </location>
</feature>
<feature type="topological domain" description="Lumenal" evidence="1">
    <location>
        <begin position="404"/>
        <end position="414"/>
    </location>
</feature>
<sequence>MESRVLTGGATAIRGGLPLLRKPAAVMKFTTAAHAISRDFPAGAVTAKPVGPLIAGPNLIWGRQLRPAILLETSPKRESIKPCSAAASSSAGSSDSSGDAKVGFFNKATLTTGFFFFMWYFLNVIFNILNKKIYNYFPYPYFVSVIHLAVGVVYCLVSWGVGLPKRAPIDSTQLKLLTPVAFCHALGHVTSNVSFAAVRVSFTHTVKALEPFFNAAASQFILGQQIPLALWLSLAPVVLGVSMASLTELSFNWLGFTSAMISNISFTYRSIYSKKAMTDMDSTNVYAYISIIALIFCLPPAIFIEGPQLLQHGFNDAIAKVGLTKFVTDLFWVGMFYHLYNQVATNTLERVAPLTHAVGNVLKRVFVIGFSIVIFGNKISTQTGIGTCIAIAGVAIYSFIKAKMEEEKRQKKAA</sequence>
<dbReference type="EMBL" id="X67045">
    <property type="protein sequence ID" value="CAA47430.1"/>
    <property type="molecule type" value="mRNA"/>
</dbReference>
<dbReference type="PIR" id="S23224">
    <property type="entry name" value="S23224"/>
</dbReference>
<dbReference type="PIR" id="S34829">
    <property type="entry name" value="S34829"/>
</dbReference>
<dbReference type="RefSeq" id="NP_001274825.1">
    <property type="nucleotide sequence ID" value="NM_001287896.1"/>
</dbReference>
<dbReference type="SMR" id="P29463"/>
<dbReference type="FunCoup" id="P29463">
    <property type="interactions" value="3136"/>
</dbReference>
<dbReference type="STRING" id="4113.P29463"/>
<dbReference type="PaxDb" id="4113-PGSC0003DMT400058772"/>
<dbReference type="GeneID" id="102585108"/>
<dbReference type="KEGG" id="sot:102585108"/>
<dbReference type="eggNOG" id="KOG1441">
    <property type="taxonomic scope" value="Eukaryota"/>
</dbReference>
<dbReference type="InParanoid" id="P29463"/>
<dbReference type="OrthoDB" id="6418713at2759"/>
<dbReference type="Proteomes" id="UP000011115">
    <property type="component" value="Unassembled WGS sequence"/>
</dbReference>
<dbReference type="ExpressionAtlas" id="P29463">
    <property type="expression patterns" value="baseline and differential"/>
</dbReference>
<dbReference type="GO" id="GO:0031969">
    <property type="term" value="C:chloroplast membrane"/>
    <property type="evidence" value="ECO:0007669"/>
    <property type="project" value="UniProtKB-SubCell"/>
</dbReference>
<dbReference type="GO" id="GO:0005794">
    <property type="term" value="C:Golgi apparatus"/>
    <property type="evidence" value="ECO:0000318"/>
    <property type="project" value="GO_Central"/>
</dbReference>
<dbReference type="GO" id="GO:0015297">
    <property type="term" value="F:antiporter activity"/>
    <property type="evidence" value="ECO:0000318"/>
    <property type="project" value="GO_Central"/>
</dbReference>
<dbReference type="GO" id="GO:0015605">
    <property type="term" value="F:organophosphate ester transmembrane transporter activity"/>
    <property type="evidence" value="ECO:0007669"/>
    <property type="project" value="UniProtKB-ARBA"/>
</dbReference>
<dbReference type="GO" id="GO:0015120">
    <property type="term" value="F:phosphoglycerate transmembrane transporter activity"/>
    <property type="evidence" value="ECO:0007669"/>
    <property type="project" value="UniProtKB-ARBA"/>
</dbReference>
<dbReference type="GO" id="GO:0055085">
    <property type="term" value="P:transmembrane transport"/>
    <property type="evidence" value="ECO:0000318"/>
    <property type="project" value="GO_Central"/>
</dbReference>
<dbReference type="InterPro" id="IPR004853">
    <property type="entry name" value="Sugar_P_trans_dom"/>
</dbReference>
<dbReference type="InterPro" id="IPR004696">
    <property type="entry name" value="Tpt_PEP_transl"/>
</dbReference>
<dbReference type="InterPro" id="IPR050186">
    <property type="entry name" value="TPT_transporter"/>
</dbReference>
<dbReference type="NCBIfam" id="TIGR00817">
    <property type="entry name" value="tpt"/>
    <property type="match status" value="1"/>
</dbReference>
<dbReference type="PANTHER" id="PTHR11132">
    <property type="entry name" value="SOLUTE CARRIER FAMILY 35"/>
    <property type="match status" value="1"/>
</dbReference>
<dbReference type="Pfam" id="PF03151">
    <property type="entry name" value="TPT"/>
    <property type="match status" value="1"/>
</dbReference>
<dbReference type="SUPFAM" id="SSF103481">
    <property type="entry name" value="Multidrug resistance efflux transporter EmrE"/>
    <property type="match status" value="2"/>
</dbReference>